<evidence type="ECO:0000250" key="1">
    <source>
        <dbReference type="UniProtKB" id="Q8WWB7"/>
    </source>
</evidence>
<evidence type="ECO:0000250" key="2">
    <source>
        <dbReference type="UniProtKB" id="Q9JHJ3"/>
    </source>
</evidence>
<evidence type="ECO:0000255" key="3"/>
<evidence type="ECO:0000305" key="4"/>
<comment type="function">
    <text evidence="2">Required to protect lysosomal transporter MFSD1 from lysosomal proteolysis and for MFSD1 lysosomal localization.</text>
</comment>
<comment type="subunit">
    <text evidence="2">Interacts (via lumenal domain) with lysosomal protein MFSD1; the interaction starts while both proteins are still in the endoplasmic reticulum and is required for stabilization of MFSD1 in lysosomes but has no direct effect on its targeting to lysosomes or transporter activity.</text>
</comment>
<comment type="subcellular location">
    <subcellularLocation>
        <location evidence="2">Lysosome membrane</location>
        <topology evidence="3">Single-pass type I membrane protein</topology>
        <orientation evidence="4">Lumenal side</orientation>
    </subcellularLocation>
</comment>
<comment type="PTM">
    <text evidence="2">Highly N-glycosylated. N-glycosylation is essential for GLMP stability and for MFSD1 lysosomal localization.</text>
</comment>
<comment type="similarity">
    <text evidence="4">Belongs to the GLMP family.</text>
</comment>
<name>GLMP_BOVIN</name>
<reference key="1">
    <citation type="submission" date="2006-08" db="EMBL/GenBank/DDBJ databases">
        <authorList>
            <consortium name="NIH - Mammalian Gene Collection (MGC) project"/>
        </authorList>
    </citation>
    <scope>NUCLEOTIDE SEQUENCE [LARGE SCALE MRNA]</scope>
    <source>
        <strain>Hereford</strain>
        <tissue>Thalamus</tissue>
    </source>
</reference>
<organism>
    <name type="scientific">Bos taurus</name>
    <name type="common">Bovine</name>
    <dbReference type="NCBI Taxonomy" id="9913"/>
    <lineage>
        <taxon>Eukaryota</taxon>
        <taxon>Metazoa</taxon>
        <taxon>Chordata</taxon>
        <taxon>Craniata</taxon>
        <taxon>Vertebrata</taxon>
        <taxon>Euteleostomi</taxon>
        <taxon>Mammalia</taxon>
        <taxon>Eutheria</taxon>
        <taxon>Laurasiatheria</taxon>
        <taxon>Artiodactyla</taxon>
        <taxon>Ruminantia</taxon>
        <taxon>Pecora</taxon>
        <taxon>Bovidae</taxon>
        <taxon>Bovinae</taxon>
        <taxon>Bos</taxon>
    </lineage>
</organism>
<keyword id="KW-0325">Glycoprotein</keyword>
<keyword id="KW-0458">Lysosome</keyword>
<keyword id="KW-0472">Membrane</keyword>
<keyword id="KW-1185">Reference proteome</keyword>
<keyword id="KW-0732">Signal</keyword>
<keyword id="KW-0812">Transmembrane</keyword>
<keyword id="KW-1133">Transmembrane helix</keyword>
<feature type="signal peptide" evidence="3">
    <location>
        <begin position="1"/>
        <end position="26"/>
    </location>
</feature>
<feature type="chain" id="PRO_0000284483" description="Glycosylated lysosomal membrane protein" evidence="4">
    <location>
        <begin position="27"/>
        <end position="404"/>
    </location>
</feature>
<feature type="topological domain" description="Lumenal" evidence="3">
    <location>
        <begin position="27"/>
        <end position="370"/>
    </location>
</feature>
<feature type="transmembrane region" description="Helical" evidence="3">
    <location>
        <begin position="371"/>
        <end position="391"/>
    </location>
</feature>
<feature type="topological domain" description="Cytoplasmic" evidence="3">
    <location>
        <begin position="392"/>
        <end position="404"/>
    </location>
</feature>
<feature type="short sequence motif" description="Lysosomal targeting motif" evidence="2">
    <location>
        <begin position="400"/>
        <end position="404"/>
    </location>
</feature>
<feature type="glycosylation site" description="N-linked (GlcNAc...) asparagine" evidence="3">
    <location>
        <position position="63"/>
    </location>
</feature>
<feature type="glycosylation site" description="N-linked (GlcNAc...) asparagine" evidence="3">
    <location>
        <position position="132"/>
    </location>
</feature>
<feature type="glycosylation site" description="N-linked (GlcNAc...) asparagine" evidence="3">
    <location>
        <position position="157"/>
    </location>
</feature>
<feature type="glycosylation site" description="N-linked (GlcNAc...) asparagine" evidence="3">
    <location>
        <position position="185"/>
    </location>
</feature>
<feature type="glycosylation site" description="N-linked (GlcNAc...) asparagine" evidence="3">
    <location>
        <position position="228"/>
    </location>
</feature>
<gene>
    <name evidence="1" type="primary">GLMP</name>
</gene>
<dbReference type="EMBL" id="BC119876">
    <property type="protein sequence ID" value="AAI19877.1"/>
    <property type="molecule type" value="mRNA"/>
</dbReference>
<dbReference type="RefSeq" id="NP_001098946.1">
    <property type="nucleotide sequence ID" value="NM_001105476.1"/>
</dbReference>
<dbReference type="SMR" id="Q0P5L7"/>
<dbReference type="FunCoup" id="Q0P5L7">
    <property type="interactions" value="1011"/>
</dbReference>
<dbReference type="STRING" id="9913.ENSBTAP00000008351"/>
<dbReference type="GlyCosmos" id="Q0P5L7">
    <property type="glycosylation" value="5 sites, No reported glycans"/>
</dbReference>
<dbReference type="GlyGen" id="Q0P5L7">
    <property type="glycosylation" value="5 sites"/>
</dbReference>
<dbReference type="PaxDb" id="9913-ENSBTAP00000008351"/>
<dbReference type="Ensembl" id="ENSBTAT00000008351.7">
    <property type="protein sequence ID" value="ENSBTAP00000008351.5"/>
    <property type="gene ID" value="ENSBTAG00000006364.7"/>
</dbReference>
<dbReference type="GeneID" id="100125876"/>
<dbReference type="KEGG" id="bta:100125876"/>
<dbReference type="CTD" id="112770"/>
<dbReference type="VEuPathDB" id="HostDB:ENSBTAG00000006364"/>
<dbReference type="VGNC" id="VGNC:29409">
    <property type="gene designation" value="GLMP"/>
</dbReference>
<dbReference type="eggNOG" id="ENOG502QSBM">
    <property type="taxonomic scope" value="Eukaryota"/>
</dbReference>
<dbReference type="GeneTree" id="ENSGT00390000005131"/>
<dbReference type="HOGENOM" id="CLU_040225_0_0_1"/>
<dbReference type="InParanoid" id="Q0P5L7"/>
<dbReference type="OMA" id="TLHYLWD"/>
<dbReference type="OrthoDB" id="6264340at2759"/>
<dbReference type="TreeFam" id="TF324431"/>
<dbReference type="Proteomes" id="UP000009136">
    <property type="component" value="Chromosome 3"/>
</dbReference>
<dbReference type="Bgee" id="ENSBTAG00000006364">
    <property type="expression patterns" value="Expressed in digestive system secreted substance and 105 other cell types or tissues"/>
</dbReference>
<dbReference type="GO" id="GO:0005829">
    <property type="term" value="C:cytosol"/>
    <property type="evidence" value="ECO:0007669"/>
    <property type="project" value="Ensembl"/>
</dbReference>
<dbReference type="GO" id="GO:0005765">
    <property type="term" value="C:lysosomal membrane"/>
    <property type="evidence" value="ECO:0007669"/>
    <property type="project" value="UniProtKB-SubCell"/>
</dbReference>
<dbReference type="GO" id="GO:0005764">
    <property type="term" value="C:lysosome"/>
    <property type="evidence" value="ECO:0000250"/>
    <property type="project" value="UniProtKB"/>
</dbReference>
<dbReference type="GO" id="GO:0016020">
    <property type="term" value="C:membrane"/>
    <property type="evidence" value="ECO:0000250"/>
    <property type="project" value="UniProtKB"/>
</dbReference>
<dbReference type="GO" id="GO:0005634">
    <property type="term" value="C:nucleus"/>
    <property type="evidence" value="ECO:0007669"/>
    <property type="project" value="Ensembl"/>
</dbReference>
<dbReference type="GO" id="GO:0045944">
    <property type="term" value="P:positive regulation of transcription by RNA polymerase II"/>
    <property type="evidence" value="ECO:0007669"/>
    <property type="project" value="Ensembl"/>
</dbReference>
<dbReference type="GO" id="GO:0061462">
    <property type="term" value="P:protein localization to lysosome"/>
    <property type="evidence" value="ECO:0000250"/>
    <property type="project" value="UniProtKB"/>
</dbReference>
<dbReference type="GO" id="GO:0050821">
    <property type="term" value="P:protein stabilization"/>
    <property type="evidence" value="ECO:0000250"/>
    <property type="project" value="UniProtKB"/>
</dbReference>
<dbReference type="InterPro" id="IPR029382">
    <property type="entry name" value="NCU-G1"/>
</dbReference>
<dbReference type="PANTHER" id="PTHR31981">
    <property type="entry name" value="GLYCOSYLATED LYSOSOMAL MEMBRANE PROTEIN"/>
    <property type="match status" value="1"/>
</dbReference>
<dbReference type="PANTHER" id="PTHR31981:SF1">
    <property type="entry name" value="GLYCOSYLATED LYSOSOMAL MEMBRANE PROTEIN"/>
    <property type="match status" value="1"/>
</dbReference>
<dbReference type="Pfam" id="PF15065">
    <property type="entry name" value="NCU-G1"/>
    <property type="match status" value="1"/>
</dbReference>
<protein>
    <recommendedName>
        <fullName evidence="1">Glycosylated lysosomal membrane protein</fullName>
    </recommendedName>
    <alternativeName>
        <fullName evidence="1">Lysosomal protein NCU-G1</fullName>
    </alternativeName>
</protein>
<proteinExistence type="evidence at transcript level"/>
<sequence length="404" mass="43531">MSGYEKPSRGWGFCALSPVLLSLLMAAPLGLLGEETRQVSLKVISNRLDFSQNLLHIRAVGTNSTLHYVWSSLGPPAVLLVATNTPNSTLSVNWSLLLSSDPDGGLMVLPEESIQFSSALVFTRLFEFDSTNMSDAASRPLGKSYPPYSLANFSWNNITDSLDPATLSATFRGHPIRDPTGAFTNGSLAFRVQAFSTSGRPAQPPRLLHSADTCQLEVALVGASPRGNRSLFGLEVATLGQGPGCPSMQEQHSIDDEYTPAVFQLDQLLWGSLPSGFMQWRPVAFSQKRGSRDSAMPCQSSPLHPTLAYLLPQSPIVRAFFKTQDHSCAFNLTFGASTGPGYWDQHYLSWSVLLGVGTPPVDALSPLVLGIMAVALGAPALMLLAGGLFLLLGRKRDSEYQSIN</sequence>
<accession>Q0P5L7</accession>